<keyword id="KW-0067">ATP-binding</keyword>
<keyword id="KW-0436">Ligase</keyword>
<keyword id="KW-0547">Nucleotide-binding</keyword>
<keyword id="KW-0648">Protein biosynthesis</keyword>
<sequence length="97" mass="10627">MSNISKETVEKVANLAKLEVSETEATAFAGQLGKIIELVEQLNTLDTTNVEPTSHAIDVSNVLREDVATKGLDRKEVLKNAPDEQDGMFKVPTIMEQ</sequence>
<reference key="1">
    <citation type="journal article" date="2012" name="BMC Genomics">
        <title>Comparative genomics and transcriptomics of lineages I, II, and III strains of Listeria monocytogenes.</title>
        <authorList>
            <person name="Hain T."/>
            <person name="Ghai R."/>
            <person name="Billion A."/>
            <person name="Kuenne C.T."/>
            <person name="Steinweg C."/>
            <person name="Izar B."/>
            <person name="Mohamed W."/>
            <person name="Mraheil M."/>
            <person name="Domann E."/>
            <person name="Schaffrath S."/>
            <person name="Karst U."/>
            <person name="Goesmann A."/>
            <person name="Oehm S."/>
            <person name="Puhler A."/>
            <person name="Merkl R."/>
            <person name="Vorwerk S."/>
            <person name="Glaser P."/>
            <person name="Garrido P."/>
            <person name="Rusniok C."/>
            <person name="Buchrieser C."/>
            <person name="Goebel W."/>
            <person name="Chakraborty T."/>
        </authorList>
    </citation>
    <scope>NUCLEOTIDE SEQUENCE [LARGE SCALE GENOMIC DNA]</scope>
    <source>
        <strain>CLIP80459</strain>
    </source>
</reference>
<feature type="chain" id="PRO_1000203073" description="Aspartyl/glutamyl-tRNA(Asn/Gln) amidotransferase subunit C">
    <location>
        <begin position="1"/>
        <end position="97"/>
    </location>
</feature>
<organism>
    <name type="scientific">Listeria monocytogenes serotype 4b (strain CLIP80459)</name>
    <dbReference type="NCBI Taxonomy" id="568819"/>
    <lineage>
        <taxon>Bacteria</taxon>
        <taxon>Bacillati</taxon>
        <taxon>Bacillota</taxon>
        <taxon>Bacilli</taxon>
        <taxon>Bacillales</taxon>
        <taxon>Listeriaceae</taxon>
        <taxon>Listeria</taxon>
    </lineage>
</organism>
<evidence type="ECO:0000255" key="1">
    <source>
        <dbReference type="HAMAP-Rule" id="MF_00122"/>
    </source>
</evidence>
<name>GATC_LISMC</name>
<dbReference type="EC" id="6.3.5.-" evidence="1"/>
<dbReference type="EMBL" id="FM242711">
    <property type="protein sequence ID" value="CAS05530.1"/>
    <property type="molecule type" value="Genomic_DNA"/>
</dbReference>
<dbReference type="RefSeq" id="WP_003722233.1">
    <property type="nucleotide sequence ID" value="NC_012488.1"/>
</dbReference>
<dbReference type="SMR" id="C1KW55"/>
<dbReference type="KEGG" id="lmc:Lm4b_01770"/>
<dbReference type="HOGENOM" id="CLU_105899_6_1_9"/>
<dbReference type="GO" id="GO:0050566">
    <property type="term" value="F:asparaginyl-tRNA synthase (glutamine-hydrolyzing) activity"/>
    <property type="evidence" value="ECO:0007669"/>
    <property type="project" value="RHEA"/>
</dbReference>
<dbReference type="GO" id="GO:0005524">
    <property type="term" value="F:ATP binding"/>
    <property type="evidence" value="ECO:0007669"/>
    <property type="project" value="UniProtKB-KW"/>
</dbReference>
<dbReference type="GO" id="GO:0050567">
    <property type="term" value="F:glutaminyl-tRNA synthase (glutamine-hydrolyzing) activity"/>
    <property type="evidence" value="ECO:0007669"/>
    <property type="project" value="UniProtKB-UniRule"/>
</dbReference>
<dbReference type="GO" id="GO:0070681">
    <property type="term" value="P:glutaminyl-tRNAGln biosynthesis via transamidation"/>
    <property type="evidence" value="ECO:0007669"/>
    <property type="project" value="TreeGrafter"/>
</dbReference>
<dbReference type="GO" id="GO:0006450">
    <property type="term" value="P:regulation of translational fidelity"/>
    <property type="evidence" value="ECO:0007669"/>
    <property type="project" value="InterPro"/>
</dbReference>
<dbReference type="GO" id="GO:0006412">
    <property type="term" value="P:translation"/>
    <property type="evidence" value="ECO:0007669"/>
    <property type="project" value="UniProtKB-UniRule"/>
</dbReference>
<dbReference type="Gene3D" id="1.10.20.60">
    <property type="entry name" value="Glu-tRNAGln amidotransferase C subunit, N-terminal domain"/>
    <property type="match status" value="1"/>
</dbReference>
<dbReference type="HAMAP" id="MF_00122">
    <property type="entry name" value="GatC"/>
    <property type="match status" value="1"/>
</dbReference>
<dbReference type="InterPro" id="IPR036113">
    <property type="entry name" value="Asp/Glu-ADT_sf_sub_c"/>
</dbReference>
<dbReference type="InterPro" id="IPR003837">
    <property type="entry name" value="GatC"/>
</dbReference>
<dbReference type="NCBIfam" id="TIGR00135">
    <property type="entry name" value="gatC"/>
    <property type="match status" value="1"/>
</dbReference>
<dbReference type="PANTHER" id="PTHR15004">
    <property type="entry name" value="GLUTAMYL-TRNA(GLN) AMIDOTRANSFERASE SUBUNIT C, MITOCHONDRIAL"/>
    <property type="match status" value="1"/>
</dbReference>
<dbReference type="PANTHER" id="PTHR15004:SF0">
    <property type="entry name" value="GLUTAMYL-TRNA(GLN) AMIDOTRANSFERASE SUBUNIT C, MITOCHONDRIAL"/>
    <property type="match status" value="1"/>
</dbReference>
<dbReference type="Pfam" id="PF02686">
    <property type="entry name" value="GatC"/>
    <property type="match status" value="1"/>
</dbReference>
<dbReference type="SUPFAM" id="SSF141000">
    <property type="entry name" value="Glu-tRNAGln amidotransferase C subunit"/>
    <property type="match status" value="1"/>
</dbReference>
<proteinExistence type="inferred from homology"/>
<protein>
    <recommendedName>
        <fullName evidence="1">Aspartyl/glutamyl-tRNA(Asn/Gln) amidotransferase subunit C</fullName>
        <shortName evidence="1">Asp/Glu-ADT subunit C</shortName>
        <ecNumber evidence="1">6.3.5.-</ecNumber>
    </recommendedName>
</protein>
<accession>C1KW55</accession>
<gene>
    <name evidence="1" type="primary">gatC</name>
    <name type="ordered locus">Lm4b_01770</name>
</gene>
<comment type="function">
    <text evidence="1">Allows the formation of correctly charged Asn-tRNA(Asn) or Gln-tRNA(Gln) through the transamidation of misacylated Asp-tRNA(Asn) or Glu-tRNA(Gln) in organisms which lack either or both of asparaginyl-tRNA or glutaminyl-tRNA synthetases. The reaction takes place in the presence of glutamine and ATP through an activated phospho-Asp-tRNA(Asn) or phospho-Glu-tRNA(Gln).</text>
</comment>
<comment type="catalytic activity">
    <reaction evidence="1">
        <text>L-glutamyl-tRNA(Gln) + L-glutamine + ATP + H2O = L-glutaminyl-tRNA(Gln) + L-glutamate + ADP + phosphate + H(+)</text>
        <dbReference type="Rhea" id="RHEA:17521"/>
        <dbReference type="Rhea" id="RHEA-COMP:9681"/>
        <dbReference type="Rhea" id="RHEA-COMP:9684"/>
        <dbReference type="ChEBI" id="CHEBI:15377"/>
        <dbReference type="ChEBI" id="CHEBI:15378"/>
        <dbReference type="ChEBI" id="CHEBI:29985"/>
        <dbReference type="ChEBI" id="CHEBI:30616"/>
        <dbReference type="ChEBI" id="CHEBI:43474"/>
        <dbReference type="ChEBI" id="CHEBI:58359"/>
        <dbReference type="ChEBI" id="CHEBI:78520"/>
        <dbReference type="ChEBI" id="CHEBI:78521"/>
        <dbReference type="ChEBI" id="CHEBI:456216"/>
    </reaction>
</comment>
<comment type="catalytic activity">
    <reaction evidence="1">
        <text>L-aspartyl-tRNA(Asn) + L-glutamine + ATP + H2O = L-asparaginyl-tRNA(Asn) + L-glutamate + ADP + phosphate + 2 H(+)</text>
        <dbReference type="Rhea" id="RHEA:14513"/>
        <dbReference type="Rhea" id="RHEA-COMP:9674"/>
        <dbReference type="Rhea" id="RHEA-COMP:9677"/>
        <dbReference type="ChEBI" id="CHEBI:15377"/>
        <dbReference type="ChEBI" id="CHEBI:15378"/>
        <dbReference type="ChEBI" id="CHEBI:29985"/>
        <dbReference type="ChEBI" id="CHEBI:30616"/>
        <dbReference type="ChEBI" id="CHEBI:43474"/>
        <dbReference type="ChEBI" id="CHEBI:58359"/>
        <dbReference type="ChEBI" id="CHEBI:78515"/>
        <dbReference type="ChEBI" id="CHEBI:78516"/>
        <dbReference type="ChEBI" id="CHEBI:456216"/>
    </reaction>
</comment>
<comment type="subunit">
    <text evidence="1">Heterotrimer of A, B and C subunits.</text>
</comment>
<comment type="similarity">
    <text evidence="1">Belongs to the GatC family.</text>
</comment>